<sequence>MTRPIWMGDEPPPDRPPTLAGRGRLALRGGAMALVLMAGLTLHLAVRLIERPLHGGHRPWTPAITPVVCRICVAILGLRYSVRGRPMQHIGAVVANHTGWLDIFTLNACQRLYFVSKDEVADWPFIGWLARATGTVFIRRDPREAKAQQALLEDRIRDGHHLLFFPEGTSTDGLQVLPFKTTLFAAFYTHGLDKVMQIQPVTVNYTAPEGEDPRFYGWWRDMPFATHLAKVLSVARQGAAEVVFHPPLDVSDFPSRKDLAAACEAAVRSGMGQRSR</sequence>
<feature type="chain" id="PRO_0000452118" description="Lyso-ornithine lipid O-acyltransferase">
    <location>
        <begin position="1"/>
        <end position="276"/>
    </location>
</feature>
<feature type="transmembrane region" description="Helical" evidence="2">
    <location>
        <begin position="25"/>
        <end position="47"/>
    </location>
</feature>
<dbReference type="EC" id="2.3.1.270" evidence="1"/>
<dbReference type="EC" id="2.3.1.n4" evidence="4"/>
<dbReference type="EMBL" id="CP001312">
    <property type="protein sequence ID" value="ADE86724.1"/>
    <property type="molecule type" value="Genomic_DNA"/>
</dbReference>
<dbReference type="SMR" id="D5AQD5"/>
<dbReference type="STRING" id="272942.RCAP_rcc02997"/>
<dbReference type="KEGG" id="rcp:RCAP_rcc02997"/>
<dbReference type="eggNOG" id="COG0204">
    <property type="taxonomic scope" value="Bacteria"/>
</dbReference>
<dbReference type="HOGENOM" id="CLU_027938_0_1_5"/>
<dbReference type="OrthoDB" id="9806880at2"/>
<dbReference type="Proteomes" id="UP000002361">
    <property type="component" value="Chromosome"/>
</dbReference>
<dbReference type="GO" id="GO:0016020">
    <property type="term" value="C:membrane"/>
    <property type="evidence" value="ECO:0007669"/>
    <property type="project" value="UniProtKB-SubCell"/>
</dbReference>
<dbReference type="GO" id="GO:0003841">
    <property type="term" value="F:1-acylglycerol-3-phosphate O-acyltransferase activity"/>
    <property type="evidence" value="ECO:0007669"/>
    <property type="project" value="TreeGrafter"/>
</dbReference>
<dbReference type="GO" id="GO:0006654">
    <property type="term" value="P:phosphatidic acid biosynthetic process"/>
    <property type="evidence" value="ECO:0007669"/>
    <property type="project" value="TreeGrafter"/>
</dbReference>
<dbReference type="CDD" id="cd07989">
    <property type="entry name" value="LPLAT_AGPAT-like"/>
    <property type="match status" value="1"/>
</dbReference>
<dbReference type="InterPro" id="IPR002123">
    <property type="entry name" value="Plipid/glycerol_acylTrfase"/>
</dbReference>
<dbReference type="PANTHER" id="PTHR10434">
    <property type="entry name" value="1-ACYL-SN-GLYCEROL-3-PHOSPHATE ACYLTRANSFERASE"/>
    <property type="match status" value="1"/>
</dbReference>
<dbReference type="PANTHER" id="PTHR10434:SF64">
    <property type="entry name" value="1-ACYL-SN-GLYCEROL-3-PHOSPHATE ACYLTRANSFERASE-RELATED"/>
    <property type="match status" value="1"/>
</dbReference>
<dbReference type="Pfam" id="PF01553">
    <property type="entry name" value="Acyltransferase"/>
    <property type="match status" value="1"/>
</dbReference>
<dbReference type="SMART" id="SM00563">
    <property type="entry name" value="PlsC"/>
    <property type="match status" value="1"/>
</dbReference>
<dbReference type="SUPFAM" id="SSF69593">
    <property type="entry name" value="Glycerol-3-phosphate (1)-acyltransferase"/>
    <property type="match status" value="1"/>
</dbReference>
<protein>
    <recommendedName>
        <fullName evidence="7">Lyso-ornithine lipid O-acyltransferase</fullName>
        <ecNumber evidence="1">2.3.1.270</ecNumber>
    </recommendedName>
    <alternativeName>
        <fullName evidence="6">1-acyl-sn-glycerol-3-phosphate acyltransferase</fullName>
        <shortName evidence="7">1-AGP acyltransferase</shortName>
        <shortName evidence="6">1-AGPAT</shortName>
        <ecNumber evidence="4">2.3.1.n4</ecNumber>
    </alternativeName>
</protein>
<organism>
    <name type="scientific">Rhodobacter capsulatus (strain ATCC BAA-309 / NBRC 16581 / SB1003)</name>
    <dbReference type="NCBI Taxonomy" id="272942"/>
    <lineage>
        <taxon>Bacteria</taxon>
        <taxon>Pseudomonadati</taxon>
        <taxon>Pseudomonadota</taxon>
        <taxon>Alphaproteobacteria</taxon>
        <taxon>Rhodobacterales</taxon>
        <taxon>Rhodobacter group</taxon>
        <taxon>Rhodobacter</taxon>
    </lineage>
</organism>
<reference key="1">
    <citation type="journal article" date="2010" name="J. Bacteriol.">
        <title>Complete genome sequence of the photosynthetic purple nonsulfur bacterium Rhodobacter capsulatus SB 1003.</title>
        <authorList>
            <person name="Strnad H."/>
            <person name="Lapidus A."/>
            <person name="Paces J."/>
            <person name="Ulbrich P."/>
            <person name="Vlcek C."/>
            <person name="Paces V."/>
            <person name="Haselkorn R."/>
        </authorList>
    </citation>
    <scope>NUCLEOTIDE SEQUENCE [LARGE SCALE GENOMIC DNA]</scope>
    <source>
        <strain>ATCC BAA-309 / NBRC 16581 / SB1003</strain>
    </source>
</reference>
<reference key="2">
    <citation type="journal article" date="2006" name="Mol. Microbiol.">
        <title>Ornithine lipid is required for optimal steady-state amounts of c-type cytochromes in Rhodobacter capsulatus.</title>
        <authorList>
            <person name="Aygun-Sunar S."/>
            <person name="Mandaci S."/>
            <person name="Koch H.G."/>
            <person name="Murray I.V."/>
            <person name="Goldfine H."/>
            <person name="Daldal F."/>
        </authorList>
    </citation>
    <scope>FUNCTION</scope>
    <scope>PATHWAY</scope>
    <scope>DISRUPTION PHENOTYPE</scope>
    <source>
        <strain>MT1131</strain>
    </source>
</reference>
<reference key="3">
    <citation type="journal article" date="2007" name="J. Bacteriol.">
        <title>Rhodobacter capsulatus OlsA is a bifunctional enzyme active in both ornithine lipid and phosphatidic acid biosynthesis.</title>
        <authorList>
            <person name="Aygun-Sunar S."/>
            <person name="Bilaloglu R."/>
            <person name="Goldfine H."/>
            <person name="Daldal F."/>
        </authorList>
    </citation>
    <scope>FUNCTION</scope>
    <scope>CATALYTIC ACTIVITY</scope>
    <scope>PATHWAY</scope>
    <source>
        <strain>MT1131</strain>
    </source>
</reference>
<keyword id="KW-0012">Acyltransferase</keyword>
<keyword id="KW-0444">Lipid biosynthesis</keyword>
<keyword id="KW-0443">Lipid metabolism</keyword>
<keyword id="KW-0472">Membrane</keyword>
<keyword id="KW-0594">Phospholipid biosynthesis</keyword>
<keyword id="KW-1208">Phospholipid metabolism</keyword>
<keyword id="KW-1185">Reference proteome</keyword>
<keyword id="KW-0808">Transferase</keyword>
<keyword id="KW-0812">Transmembrane</keyword>
<keyword id="KW-1133">Transmembrane helix</keyword>
<comment type="function">
    <text evidence="1 4 8">Catalyzes the second step in the formation of ornithine lipids, which are phosphorus-free membrane lipids (Probable). Uses acyl-acyl carrier protein (acyl-AcpP) as an acyl donor and converts lyso-ornithine lipid (LOL) into ornithine lipid (OL) (By similarity). It can also act as an alternate acyl-sn-glycerol-3-phosphate acyltransferase (AGPAT) to ensure glycerophospholipid production (PubMed:17921310).</text>
</comment>
<comment type="catalytic activity">
    <reaction evidence="1">
        <text>a lyso-ornithine lipid + a fatty acyl-[ACP] = an N(2)-[(3R)-3-(acyloxy)acyl]-L-ornithine lipid + holo-[ACP]</text>
        <dbReference type="Rhea" id="RHEA:55760"/>
        <dbReference type="Rhea" id="RHEA-COMP:9685"/>
        <dbReference type="Rhea" id="RHEA-COMP:14125"/>
        <dbReference type="ChEBI" id="CHEBI:64479"/>
        <dbReference type="ChEBI" id="CHEBI:138482"/>
        <dbReference type="ChEBI" id="CHEBI:138651"/>
        <dbReference type="ChEBI" id="CHEBI:140663"/>
        <dbReference type="EC" id="2.3.1.270"/>
    </reaction>
    <physiologicalReaction direction="left-to-right" evidence="1">
        <dbReference type="Rhea" id="RHEA:55761"/>
    </physiologicalReaction>
</comment>
<comment type="catalytic activity">
    <reaction evidence="4">
        <text>a fatty acyl-[ACP] + a 1-acyl-sn-glycero-3-phosphate = a 1,2-diacyl-sn-glycero-3-phosphate + holo-[ACP]</text>
        <dbReference type="Rhea" id="RHEA:42296"/>
        <dbReference type="Rhea" id="RHEA-COMP:9685"/>
        <dbReference type="Rhea" id="RHEA-COMP:14125"/>
        <dbReference type="ChEBI" id="CHEBI:57970"/>
        <dbReference type="ChEBI" id="CHEBI:58608"/>
        <dbReference type="ChEBI" id="CHEBI:64479"/>
        <dbReference type="ChEBI" id="CHEBI:138651"/>
        <dbReference type="EC" id="2.3.1.n4"/>
    </reaction>
</comment>
<comment type="pathway">
    <text evidence="3">Lipid metabolism.</text>
</comment>
<comment type="pathway">
    <text evidence="4">Phospholipid metabolism.</text>
</comment>
<comment type="subcellular location">
    <subcellularLocation>
        <location evidence="2">Membrane</location>
        <topology evidence="2">Single-pass membrane protein</topology>
    </subcellularLocation>
</comment>
<comment type="disruption phenotype">
    <text evidence="3">Mutant lacking this gene is unable to produce ornithine lipids.</text>
</comment>
<comment type="similarity">
    <text evidence="7">Belongs to the 1-acyl-sn-glycerol-3-phosphate acyltransferase family. OlsA subfamily.</text>
</comment>
<evidence type="ECO:0000250" key="1">
    <source>
        <dbReference type="UniProtKB" id="Q7APG1"/>
    </source>
</evidence>
<evidence type="ECO:0000255" key="2"/>
<evidence type="ECO:0000269" key="3">
    <source>
    </source>
</evidence>
<evidence type="ECO:0000269" key="4">
    <source>
    </source>
</evidence>
<evidence type="ECO:0000303" key="5">
    <source>
    </source>
</evidence>
<evidence type="ECO:0000303" key="6">
    <source>
    </source>
</evidence>
<evidence type="ECO:0000305" key="7"/>
<evidence type="ECO:0000305" key="8">
    <source>
    </source>
</evidence>
<evidence type="ECO:0000312" key="9">
    <source>
        <dbReference type="EMBL" id="ADE86724.1"/>
    </source>
</evidence>
<accession>D5AQD5</accession>
<proteinExistence type="evidence at protein level"/>
<gene>
    <name evidence="5" type="primary">olsA</name>
    <name evidence="9" type="ordered locus">RCAP_rcc02997</name>
</gene>
<name>OLSA_RHOCB</name>